<gene>
    <name evidence="1" type="primary">queC</name>
    <name type="ordered locus">CKO_02716</name>
</gene>
<organism>
    <name type="scientific">Citrobacter koseri (strain ATCC BAA-895 / CDC 4225-83 / SGSC4696)</name>
    <dbReference type="NCBI Taxonomy" id="290338"/>
    <lineage>
        <taxon>Bacteria</taxon>
        <taxon>Pseudomonadati</taxon>
        <taxon>Pseudomonadota</taxon>
        <taxon>Gammaproteobacteria</taxon>
        <taxon>Enterobacterales</taxon>
        <taxon>Enterobacteriaceae</taxon>
        <taxon>Citrobacter</taxon>
    </lineage>
</organism>
<keyword id="KW-0067">ATP-binding</keyword>
<keyword id="KW-0436">Ligase</keyword>
<keyword id="KW-0479">Metal-binding</keyword>
<keyword id="KW-0547">Nucleotide-binding</keyword>
<keyword id="KW-0671">Queuosine biosynthesis</keyword>
<keyword id="KW-1185">Reference proteome</keyword>
<keyword id="KW-0862">Zinc</keyword>
<feature type="chain" id="PRO_1000069764" description="7-cyano-7-deazaguanine synthase">
    <location>
        <begin position="1"/>
        <end position="231"/>
    </location>
</feature>
<feature type="binding site" evidence="1">
    <location>
        <begin position="8"/>
        <end position="18"/>
    </location>
    <ligand>
        <name>ATP</name>
        <dbReference type="ChEBI" id="CHEBI:30616"/>
    </ligand>
</feature>
<feature type="binding site" evidence="1">
    <location>
        <position position="188"/>
    </location>
    <ligand>
        <name>Zn(2+)</name>
        <dbReference type="ChEBI" id="CHEBI:29105"/>
    </ligand>
</feature>
<feature type="binding site" evidence="1">
    <location>
        <position position="197"/>
    </location>
    <ligand>
        <name>Zn(2+)</name>
        <dbReference type="ChEBI" id="CHEBI:29105"/>
    </ligand>
</feature>
<feature type="binding site" evidence="1">
    <location>
        <position position="200"/>
    </location>
    <ligand>
        <name>Zn(2+)</name>
        <dbReference type="ChEBI" id="CHEBI:29105"/>
    </ligand>
</feature>
<feature type="binding site" evidence="1">
    <location>
        <position position="203"/>
    </location>
    <ligand>
        <name>Zn(2+)</name>
        <dbReference type="ChEBI" id="CHEBI:29105"/>
    </ligand>
</feature>
<comment type="function">
    <text evidence="1">Catalyzes the ATP-dependent conversion of 7-carboxy-7-deazaguanine (CDG) to 7-cyano-7-deazaguanine (preQ(0)).</text>
</comment>
<comment type="catalytic activity">
    <reaction evidence="1">
        <text>7-carboxy-7-deazaguanine + NH4(+) + ATP = 7-cyano-7-deazaguanine + ADP + phosphate + H2O + H(+)</text>
        <dbReference type="Rhea" id="RHEA:27982"/>
        <dbReference type="ChEBI" id="CHEBI:15377"/>
        <dbReference type="ChEBI" id="CHEBI:15378"/>
        <dbReference type="ChEBI" id="CHEBI:28938"/>
        <dbReference type="ChEBI" id="CHEBI:30616"/>
        <dbReference type="ChEBI" id="CHEBI:43474"/>
        <dbReference type="ChEBI" id="CHEBI:45075"/>
        <dbReference type="ChEBI" id="CHEBI:61036"/>
        <dbReference type="ChEBI" id="CHEBI:456216"/>
        <dbReference type="EC" id="6.3.4.20"/>
    </reaction>
</comment>
<comment type="cofactor">
    <cofactor evidence="1">
        <name>Zn(2+)</name>
        <dbReference type="ChEBI" id="CHEBI:29105"/>
    </cofactor>
    <text evidence="1">Binds 1 zinc ion per subunit.</text>
</comment>
<comment type="pathway">
    <text evidence="1">Purine metabolism; 7-cyano-7-deazaguanine biosynthesis.</text>
</comment>
<comment type="similarity">
    <text evidence="1">Belongs to the QueC family.</text>
</comment>
<proteinExistence type="inferred from homology"/>
<name>QUEC_CITK8</name>
<reference key="1">
    <citation type="submission" date="2007-08" db="EMBL/GenBank/DDBJ databases">
        <authorList>
            <consortium name="The Citrobacter koseri Genome Sequencing Project"/>
            <person name="McClelland M."/>
            <person name="Sanderson E.K."/>
            <person name="Porwollik S."/>
            <person name="Spieth J."/>
            <person name="Clifton W.S."/>
            <person name="Latreille P."/>
            <person name="Courtney L."/>
            <person name="Wang C."/>
            <person name="Pepin K."/>
            <person name="Bhonagiri V."/>
            <person name="Nash W."/>
            <person name="Johnson M."/>
            <person name="Thiruvilangam P."/>
            <person name="Wilson R."/>
        </authorList>
    </citation>
    <scope>NUCLEOTIDE SEQUENCE [LARGE SCALE GENOMIC DNA]</scope>
    <source>
        <strain>ATCC BAA-895 / CDC 4225-83 / SGSC4696</strain>
    </source>
</reference>
<dbReference type="EC" id="6.3.4.20" evidence="1"/>
<dbReference type="EMBL" id="CP000822">
    <property type="protein sequence ID" value="ABV13822.1"/>
    <property type="molecule type" value="Genomic_DNA"/>
</dbReference>
<dbReference type="RefSeq" id="WP_012133538.1">
    <property type="nucleotide sequence ID" value="NC_009792.1"/>
</dbReference>
<dbReference type="SMR" id="A8AK09"/>
<dbReference type="STRING" id="290338.CKO_02716"/>
<dbReference type="GeneID" id="45136571"/>
<dbReference type="KEGG" id="cko:CKO_02716"/>
<dbReference type="HOGENOM" id="CLU_081854_0_0_6"/>
<dbReference type="OrthoDB" id="9789567at2"/>
<dbReference type="UniPathway" id="UPA00391"/>
<dbReference type="Proteomes" id="UP000008148">
    <property type="component" value="Chromosome"/>
</dbReference>
<dbReference type="GO" id="GO:0005524">
    <property type="term" value="F:ATP binding"/>
    <property type="evidence" value="ECO:0007669"/>
    <property type="project" value="UniProtKB-UniRule"/>
</dbReference>
<dbReference type="GO" id="GO:0016879">
    <property type="term" value="F:ligase activity, forming carbon-nitrogen bonds"/>
    <property type="evidence" value="ECO:0007669"/>
    <property type="project" value="UniProtKB-UniRule"/>
</dbReference>
<dbReference type="GO" id="GO:0008270">
    <property type="term" value="F:zinc ion binding"/>
    <property type="evidence" value="ECO:0007669"/>
    <property type="project" value="UniProtKB-UniRule"/>
</dbReference>
<dbReference type="GO" id="GO:0008616">
    <property type="term" value="P:queuosine biosynthetic process"/>
    <property type="evidence" value="ECO:0007669"/>
    <property type="project" value="UniProtKB-UniRule"/>
</dbReference>
<dbReference type="CDD" id="cd01995">
    <property type="entry name" value="QueC-like"/>
    <property type="match status" value="1"/>
</dbReference>
<dbReference type="FunFam" id="3.40.50.620:FF:000017">
    <property type="entry name" value="7-cyano-7-deazaguanine synthase"/>
    <property type="match status" value="1"/>
</dbReference>
<dbReference type="Gene3D" id="3.40.50.620">
    <property type="entry name" value="HUPs"/>
    <property type="match status" value="1"/>
</dbReference>
<dbReference type="HAMAP" id="MF_01633">
    <property type="entry name" value="QueC"/>
    <property type="match status" value="1"/>
</dbReference>
<dbReference type="InterPro" id="IPR018317">
    <property type="entry name" value="QueC"/>
</dbReference>
<dbReference type="InterPro" id="IPR014729">
    <property type="entry name" value="Rossmann-like_a/b/a_fold"/>
</dbReference>
<dbReference type="NCBIfam" id="TIGR00364">
    <property type="entry name" value="7-cyano-7-deazaguanine synthase QueC"/>
    <property type="match status" value="1"/>
</dbReference>
<dbReference type="NCBIfam" id="NF008317">
    <property type="entry name" value="PRK11106.1"/>
    <property type="match status" value="1"/>
</dbReference>
<dbReference type="PANTHER" id="PTHR42914">
    <property type="entry name" value="7-CYANO-7-DEAZAGUANINE SYNTHASE"/>
    <property type="match status" value="1"/>
</dbReference>
<dbReference type="PANTHER" id="PTHR42914:SF1">
    <property type="entry name" value="7-CYANO-7-DEAZAGUANINE SYNTHASE"/>
    <property type="match status" value="1"/>
</dbReference>
<dbReference type="Pfam" id="PF06508">
    <property type="entry name" value="QueC"/>
    <property type="match status" value="1"/>
</dbReference>
<dbReference type="PIRSF" id="PIRSF006293">
    <property type="entry name" value="ExsB"/>
    <property type="match status" value="1"/>
</dbReference>
<dbReference type="SUPFAM" id="SSF52402">
    <property type="entry name" value="Adenine nucleotide alpha hydrolases-like"/>
    <property type="match status" value="1"/>
</dbReference>
<protein>
    <recommendedName>
        <fullName evidence="1">7-cyano-7-deazaguanine synthase</fullName>
        <ecNumber evidence="1">6.3.4.20</ecNumber>
    </recommendedName>
    <alternativeName>
        <fullName evidence="1">7-cyano-7-carbaguanine synthase</fullName>
    </alternativeName>
    <alternativeName>
        <fullName evidence="1">PreQ(0) synthase</fullName>
    </alternativeName>
    <alternativeName>
        <fullName evidence="1">Queuosine biosynthesis protein QueC</fullName>
    </alternativeName>
</protein>
<accession>A8AK09</accession>
<sequence>MKRAVVVFSGGQDSTTCLAQALHQYDEVHCVTFDYGQRHRAEIDVARDLALKLGARAHKVLDVTLLSELAVSSLTRDNIPVPDYEPDADGIPNTFVPGRNILFLTLAAIYAYQVKAEAVITGVCETDFSGYPDCRDEFVKALNHAVTLGMAKDIRFETPLMWIDKAETWALADYWGKLDLVREETLTCYNGIKGDGCGQCAACNLRANGLNHYLADKPAVMAAMKQKTGLK</sequence>
<evidence type="ECO:0000255" key="1">
    <source>
        <dbReference type="HAMAP-Rule" id="MF_01633"/>
    </source>
</evidence>